<comment type="catalytic activity">
    <reaction evidence="1">
        <text>(4aS,6R)-4a-hydroxy-L-erythro-5,6,7,8-tetrahydrobiopterin = (6R)-L-erythro-6,7-dihydrobiopterin + H2O</text>
        <dbReference type="Rhea" id="RHEA:11920"/>
        <dbReference type="ChEBI" id="CHEBI:15377"/>
        <dbReference type="ChEBI" id="CHEBI:15642"/>
        <dbReference type="ChEBI" id="CHEBI:43120"/>
        <dbReference type="EC" id="4.2.1.96"/>
    </reaction>
</comment>
<comment type="similarity">
    <text evidence="1">Belongs to the pterin-4-alpha-carbinolamine dehydratase family.</text>
</comment>
<name>PHS_HERA2</name>
<protein>
    <recommendedName>
        <fullName evidence="1">Putative pterin-4-alpha-carbinolamine dehydratase</fullName>
        <shortName evidence="1">PHS</shortName>
        <ecNumber evidence="1">4.2.1.96</ecNumber>
    </recommendedName>
    <alternativeName>
        <fullName evidence="1">4-alpha-hydroxy-tetrahydropterin dehydratase</fullName>
    </alternativeName>
    <alternativeName>
        <fullName evidence="1">Pterin carbinolamine dehydratase</fullName>
        <shortName evidence="1">PCD</shortName>
    </alternativeName>
</protein>
<evidence type="ECO:0000255" key="1">
    <source>
        <dbReference type="HAMAP-Rule" id="MF_00434"/>
    </source>
</evidence>
<gene>
    <name type="ordered locus">Haur_2248</name>
</gene>
<feature type="chain" id="PRO_1000192916" description="Putative pterin-4-alpha-carbinolamine dehydratase">
    <location>
        <begin position="1"/>
        <end position="96"/>
    </location>
</feature>
<accession>A9AXS2</accession>
<reference key="1">
    <citation type="journal article" date="2011" name="Stand. Genomic Sci.">
        <title>Complete genome sequence of the filamentous gliding predatory bacterium Herpetosiphon aurantiacus type strain (114-95(T)).</title>
        <authorList>
            <person name="Kiss H."/>
            <person name="Nett M."/>
            <person name="Domin N."/>
            <person name="Martin K."/>
            <person name="Maresca J.A."/>
            <person name="Copeland A."/>
            <person name="Lapidus A."/>
            <person name="Lucas S."/>
            <person name="Berry K.W."/>
            <person name="Glavina Del Rio T."/>
            <person name="Dalin E."/>
            <person name="Tice H."/>
            <person name="Pitluck S."/>
            <person name="Richardson P."/>
            <person name="Bruce D."/>
            <person name="Goodwin L."/>
            <person name="Han C."/>
            <person name="Detter J.C."/>
            <person name="Schmutz J."/>
            <person name="Brettin T."/>
            <person name="Land M."/>
            <person name="Hauser L."/>
            <person name="Kyrpides N.C."/>
            <person name="Ivanova N."/>
            <person name="Goeker M."/>
            <person name="Woyke T."/>
            <person name="Klenk H.P."/>
            <person name="Bryant D.A."/>
        </authorList>
    </citation>
    <scope>NUCLEOTIDE SEQUENCE [LARGE SCALE GENOMIC DNA]</scope>
    <source>
        <strain>ATCC 23779 / DSM 785 / 114-95</strain>
    </source>
</reference>
<proteinExistence type="inferred from homology"/>
<keyword id="KW-0456">Lyase</keyword>
<dbReference type="EC" id="4.2.1.96" evidence="1"/>
<dbReference type="EMBL" id="CP000875">
    <property type="protein sequence ID" value="ABX04888.1"/>
    <property type="molecule type" value="Genomic_DNA"/>
</dbReference>
<dbReference type="SMR" id="A9AXS2"/>
<dbReference type="STRING" id="316274.Haur_2248"/>
<dbReference type="KEGG" id="hau:Haur_2248"/>
<dbReference type="eggNOG" id="COG2154">
    <property type="taxonomic scope" value="Bacteria"/>
</dbReference>
<dbReference type="HOGENOM" id="CLU_081974_4_3_0"/>
<dbReference type="InParanoid" id="A9AXS2"/>
<dbReference type="BioCyc" id="HAUR316274:GHYA-2276-MONOMER"/>
<dbReference type="Proteomes" id="UP000000787">
    <property type="component" value="Chromosome"/>
</dbReference>
<dbReference type="GO" id="GO:0008124">
    <property type="term" value="F:4-alpha-hydroxytetrahydrobiopterin dehydratase activity"/>
    <property type="evidence" value="ECO:0007669"/>
    <property type="project" value="UniProtKB-UniRule"/>
</dbReference>
<dbReference type="GO" id="GO:0006729">
    <property type="term" value="P:tetrahydrobiopterin biosynthetic process"/>
    <property type="evidence" value="ECO:0007669"/>
    <property type="project" value="InterPro"/>
</dbReference>
<dbReference type="CDD" id="cd00488">
    <property type="entry name" value="PCD_DCoH"/>
    <property type="match status" value="1"/>
</dbReference>
<dbReference type="Gene3D" id="3.30.1360.20">
    <property type="entry name" value="Transcriptional coactivator/pterin dehydratase"/>
    <property type="match status" value="1"/>
</dbReference>
<dbReference type="HAMAP" id="MF_00434">
    <property type="entry name" value="Pterin_4_alpha"/>
    <property type="match status" value="1"/>
</dbReference>
<dbReference type="InterPro" id="IPR036428">
    <property type="entry name" value="PCD_sf"/>
</dbReference>
<dbReference type="InterPro" id="IPR001533">
    <property type="entry name" value="Pterin_deHydtase"/>
</dbReference>
<dbReference type="NCBIfam" id="NF002017">
    <property type="entry name" value="PRK00823.1-2"/>
    <property type="match status" value="1"/>
</dbReference>
<dbReference type="PANTHER" id="PTHR12599">
    <property type="entry name" value="PTERIN-4-ALPHA-CARBINOLAMINE DEHYDRATASE"/>
    <property type="match status" value="1"/>
</dbReference>
<dbReference type="PANTHER" id="PTHR12599:SF0">
    <property type="entry name" value="PTERIN-4-ALPHA-CARBINOLAMINE DEHYDRATASE"/>
    <property type="match status" value="1"/>
</dbReference>
<dbReference type="Pfam" id="PF01329">
    <property type="entry name" value="Pterin_4a"/>
    <property type="match status" value="1"/>
</dbReference>
<dbReference type="SUPFAM" id="SSF55248">
    <property type="entry name" value="PCD-like"/>
    <property type="match status" value="1"/>
</dbReference>
<organism>
    <name type="scientific">Herpetosiphon aurantiacus (strain ATCC 23779 / DSM 785 / 114-95)</name>
    <dbReference type="NCBI Taxonomy" id="316274"/>
    <lineage>
        <taxon>Bacteria</taxon>
        <taxon>Bacillati</taxon>
        <taxon>Chloroflexota</taxon>
        <taxon>Chloroflexia</taxon>
        <taxon>Herpetosiphonales</taxon>
        <taxon>Herpetosiphonaceae</taxon>
        <taxon>Herpetosiphon</taxon>
    </lineage>
</organism>
<sequence>MPVLAKAALQQALEQRSGWTVVDGQISKTYGLATFPFAIEFVRRIADAAEEVNHHPDIDIRYNKVTIALSTHDEKGITEKDFGLADTIDRIFAAAQ</sequence>